<feature type="chain" id="PRO_0000235934" description="Uncharacterized protein YOL155W-A">
    <location>
        <begin position="1"/>
        <end position="44"/>
    </location>
</feature>
<protein>
    <recommendedName>
        <fullName>Uncharacterized protein YOL155W-A</fullName>
    </recommendedName>
</protein>
<reference key="1">
    <citation type="journal article" date="1997" name="Nature">
        <title>The nucleotide sequence of Saccharomyces cerevisiae chromosome XV.</title>
        <authorList>
            <person name="Dujon B."/>
            <person name="Albermann K."/>
            <person name="Aldea M."/>
            <person name="Alexandraki D."/>
            <person name="Ansorge W."/>
            <person name="Arino J."/>
            <person name="Benes V."/>
            <person name="Bohn C."/>
            <person name="Bolotin-Fukuhara M."/>
            <person name="Bordonne R."/>
            <person name="Boyer J."/>
            <person name="Camasses A."/>
            <person name="Casamayor A."/>
            <person name="Casas C."/>
            <person name="Cheret G."/>
            <person name="Cziepluch C."/>
            <person name="Daignan-Fornier B."/>
            <person name="Dang V.-D."/>
            <person name="de Haan M."/>
            <person name="Delius H."/>
            <person name="Durand P."/>
            <person name="Fairhead C."/>
            <person name="Feldmann H."/>
            <person name="Gaillon L."/>
            <person name="Galisson F."/>
            <person name="Gamo F.-J."/>
            <person name="Gancedo C."/>
            <person name="Goffeau A."/>
            <person name="Goulding S.E."/>
            <person name="Grivell L.A."/>
            <person name="Habbig B."/>
            <person name="Hand N.J."/>
            <person name="Hani J."/>
            <person name="Hattenhorst U."/>
            <person name="Hebling U."/>
            <person name="Hernando Y."/>
            <person name="Herrero E."/>
            <person name="Heumann K."/>
            <person name="Hiesel R."/>
            <person name="Hilger F."/>
            <person name="Hofmann B."/>
            <person name="Hollenberg C.P."/>
            <person name="Hughes B."/>
            <person name="Jauniaux J.-C."/>
            <person name="Kalogeropoulos A."/>
            <person name="Katsoulou C."/>
            <person name="Kordes E."/>
            <person name="Lafuente M.J."/>
            <person name="Landt O."/>
            <person name="Louis E.J."/>
            <person name="Maarse A.C."/>
            <person name="Madania A."/>
            <person name="Mannhaupt G."/>
            <person name="Marck C."/>
            <person name="Martin R.P."/>
            <person name="Mewes H.-W."/>
            <person name="Michaux G."/>
            <person name="Paces V."/>
            <person name="Parle-McDermott A.G."/>
            <person name="Pearson B.M."/>
            <person name="Perrin A."/>
            <person name="Pettersson B."/>
            <person name="Poch O."/>
            <person name="Pohl T.M."/>
            <person name="Poirey R."/>
            <person name="Portetelle D."/>
            <person name="Pujol A."/>
            <person name="Purnelle B."/>
            <person name="Ramezani Rad M."/>
            <person name="Rechmann S."/>
            <person name="Schwager C."/>
            <person name="Schweizer M."/>
            <person name="Sor F."/>
            <person name="Sterky F."/>
            <person name="Tarassov I.A."/>
            <person name="Teodoru C."/>
            <person name="Tettelin H."/>
            <person name="Thierry A."/>
            <person name="Tobiasch E."/>
            <person name="Tzermia M."/>
            <person name="Uhlen M."/>
            <person name="Unseld M."/>
            <person name="Valens M."/>
            <person name="Vandenbol M."/>
            <person name="Vetter I."/>
            <person name="Vlcek C."/>
            <person name="Voet M."/>
            <person name="Volckaert G."/>
            <person name="Voss H."/>
            <person name="Wambutt R."/>
            <person name="Wedler H."/>
            <person name="Wiemann S."/>
            <person name="Winsor B."/>
            <person name="Wolfe K.H."/>
            <person name="Zollner A."/>
            <person name="Zumstein E."/>
            <person name="Kleine K."/>
        </authorList>
    </citation>
    <scope>NUCLEOTIDE SEQUENCE [LARGE SCALE GENOMIC DNA]</scope>
    <source>
        <strain>ATCC 204508 / S288c</strain>
    </source>
</reference>
<reference key="2">
    <citation type="journal article" date="2014" name="G3 (Bethesda)">
        <title>The reference genome sequence of Saccharomyces cerevisiae: Then and now.</title>
        <authorList>
            <person name="Engel S.R."/>
            <person name="Dietrich F.S."/>
            <person name="Fisk D.G."/>
            <person name="Binkley G."/>
            <person name="Balakrishnan R."/>
            <person name="Costanzo M.C."/>
            <person name="Dwight S.S."/>
            <person name="Hitz B.C."/>
            <person name="Karra K."/>
            <person name="Nash R.S."/>
            <person name="Weng S."/>
            <person name="Wong E.D."/>
            <person name="Lloyd P."/>
            <person name="Skrzypek M.S."/>
            <person name="Miyasato S.R."/>
            <person name="Simison M."/>
            <person name="Cherry J.M."/>
        </authorList>
    </citation>
    <scope>GENOME REANNOTATION</scope>
    <source>
        <strain>ATCC 204508 / S288c</strain>
    </source>
</reference>
<reference key="3">
    <citation type="journal article" date="2002" name="Genome Res.">
        <title>Parallel identification of new genes in Saccharomyces cerevisiae.</title>
        <authorList>
            <person name="Oshiro G."/>
            <person name="Wodicka L.M."/>
            <person name="Washburn M.P."/>
            <person name="Yates J.R. III"/>
            <person name="Lockhart D.J."/>
            <person name="Winzeler E.A."/>
        </authorList>
    </citation>
    <scope>IDENTIFICATION BY MASS SPECTROMETRY</scope>
</reference>
<gene>
    <name type="ordered locus">YOL155W-A</name>
    <name type="ORF">NOL049W</name>
</gene>
<proteinExistence type="evidence at protein level"/>
<accession>Q3E7Y8</accession>
<accession>D6W1R5</accession>
<keyword id="KW-1185">Reference proteome</keyword>
<name>YO155_YEAST</name>
<dbReference type="EMBL" id="Z74898">
    <property type="status" value="NOT_ANNOTATED_CDS"/>
    <property type="molecule type" value="Genomic_DNA"/>
</dbReference>
<dbReference type="EMBL" id="BK006948">
    <property type="protein sequence ID" value="DAA10631.1"/>
    <property type="molecule type" value="Genomic_DNA"/>
</dbReference>
<dbReference type="RefSeq" id="NP_878162.1">
    <property type="nucleotide sequence ID" value="NM_001184666.1"/>
</dbReference>
<dbReference type="BioGRID" id="37016">
    <property type="interactions" value="16"/>
</dbReference>
<dbReference type="FunCoup" id="Q3E7Y8">
    <property type="interactions" value="8"/>
</dbReference>
<dbReference type="STRING" id="4932.YOL155W-A"/>
<dbReference type="PaxDb" id="4932-YOL155W-A"/>
<dbReference type="EnsemblFungi" id="YOL155W-A_mRNA">
    <property type="protein sequence ID" value="YOL155W-A"/>
    <property type="gene ID" value="YOL155W-A"/>
</dbReference>
<dbReference type="GeneID" id="1466474"/>
<dbReference type="KEGG" id="sce:YOL155W-A"/>
<dbReference type="AGR" id="SGD:S000028855"/>
<dbReference type="SGD" id="S000028855">
    <property type="gene designation" value="YOL155W-A"/>
</dbReference>
<dbReference type="VEuPathDB" id="FungiDB:YOL155W-A"/>
<dbReference type="HOGENOM" id="CLU_3224926_0_0_1"/>
<dbReference type="InParanoid" id="Q3E7Y8"/>
<dbReference type="BioCyc" id="YEAST:G3O-33913-MONOMER"/>
<dbReference type="ChiTaRS" id="YOL155W-A">
    <property type="organism name" value="yeast"/>
</dbReference>
<dbReference type="PRO" id="PR:Q3E7Y8"/>
<dbReference type="Proteomes" id="UP000002311">
    <property type="component" value="Chromosome XV"/>
</dbReference>
<sequence length="44" mass="5203">MFYGSFNKCVTGYSCRMAIHYYVYRIIKSATRPDYKSNTQILVL</sequence>
<organism>
    <name type="scientific">Saccharomyces cerevisiae (strain ATCC 204508 / S288c)</name>
    <name type="common">Baker's yeast</name>
    <dbReference type="NCBI Taxonomy" id="559292"/>
    <lineage>
        <taxon>Eukaryota</taxon>
        <taxon>Fungi</taxon>
        <taxon>Dikarya</taxon>
        <taxon>Ascomycota</taxon>
        <taxon>Saccharomycotina</taxon>
        <taxon>Saccharomycetes</taxon>
        <taxon>Saccharomycetales</taxon>
        <taxon>Saccharomycetaceae</taxon>
        <taxon>Saccharomyces</taxon>
    </lineage>
</organism>